<gene>
    <name type="primary">TRS85</name>
    <name type="synonym">GSG1</name>
    <name type="synonym">MUM1</name>
    <name type="ordered locus">YDR108W</name>
    <name type="ORF">YD9727.04</name>
</gene>
<accession>P46944</accession>
<accession>D6VS94</accession>
<accession>Q04563</accession>
<dbReference type="EMBL" id="U26674">
    <property type="protein sequence ID" value="AAB03360.1"/>
    <property type="molecule type" value="Genomic_DNA"/>
</dbReference>
<dbReference type="EMBL" id="Z48758">
    <property type="protein sequence ID" value="CAA88662.1"/>
    <property type="molecule type" value="Genomic_DNA"/>
</dbReference>
<dbReference type="EMBL" id="BK006938">
    <property type="protein sequence ID" value="DAA11954.1"/>
    <property type="molecule type" value="Genomic_DNA"/>
</dbReference>
<dbReference type="PIR" id="S52674">
    <property type="entry name" value="S52674"/>
</dbReference>
<dbReference type="RefSeq" id="NP_010393.3">
    <property type="nucleotide sequence ID" value="NM_001180416.3"/>
</dbReference>
<dbReference type="PDB" id="7KMT">
    <property type="method" value="EM"/>
    <property type="resolution" value="3.70 A"/>
    <property type="chains" value="B=1-698"/>
</dbReference>
<dbReference type="PDBsum" id="7KMT"/>
<dbReference type="EMDB" id="EMD-22928"/>
<dbReference type="SMR" id="P46944"/>
<dbReference type="BioGRID" id="32166">
    <property type="interactions" value="499"/>
</dbReference>
<dbReference type="ComplexPortal" id="CPX-1383">
    <property type="entry name" value="TRAPPIII protein complex"/>
</dbReference>
<dbReference type="DIP" id="DIP-1354N"/>
<dbReference type="FunCoup" id="P46944">
    <property type="interactions" value="54"/>
</dbReference>
<dbReference type="IntAct" id="P46944">
    <property type="interactions" value="13"/>
</dbReference>
<dbReference type="MINT" id="P46944"/>
<dbReference type="STRING" id="4932.YDR108W"/>
<dbReference type="GlyGen" id="P46944">
    <property type="glycosylation" value="2 sites, 1 O-linked glycan (2 sites)"/>
</dbReference>
<dbReference type="iPTMnet" id="P46944"/>
<dbReference type="PaxDb" id="4932-YDR108W"/>
<dbReference type="PeptideAtlas" id="P46944"/>
<dbReference type="EnsemblFungi" id="YDR108W_mRNA">
    <property type="protein sequence ID" value="YDR108W"/>
    <property type="gene ID" value="YDR108W"/>
</dbReference>
<dbReference type="GeneID" id="851686"/>
<dbReference type="KEGG" id="sce:YDR108W"/>
<dbReference type="AGR" id="SGD:S000002515"/>
<dbReference type="SGD" id="S000002515">
    <property type="gene designation" value="TRS85"/>
</dbReference>
<dbReference type="VEuPathDB" id="FungiDB:YDR108W"/>
<dbReference type="eggNOG" id="KOG1938">
    <property type="taxonomic scope" value="Eukaryota"/>
</dbReference>
<dbReference type="GeneTree" id="ENSGT00390000000568"/>
<dbReference type="HOGENOM" id="CLU_015504_0_0_1"/>
<dbReference type="InParanoid" id="P46944"/>
<dbReference type="OMA" id="KLADWSM"/>
<dbReference type="OrthoDB" id="203724at2759"/>
<dbReference type="BioCyc" id="YEAST:G3O-29710-MONOMER"/>
<dbReference type="BioGRID-ORCS" id="851686">
    <property type="hits" value="0 hits in 10 CRISPR screens"/>
</dbReference>
<dbReference type="PRO" id="PR:P46944"/>
<dbReference type="Proteomes" id="UP000002311">
    <property type="component" value="Chromosome IV"/>
</dbReference>
<dbReference type="RNAct" id="P46944">
    <property type="molecule type" value="protein"/>
</dbReference>
<dbReference type="GO" id="GO:0031410">
    <property type="term" value="C:cytoplasmic vesicle"/>
    <property type="evidence" value="ECO:0000314"/>
    <property type="project" value="SGD"/>
</dbReference>
<dbReference type="GO" id="GO:0005829">
    <property type="term" value="C:cytosol"/>
    <property type="evidence" value="ECO:0007005"/>
    <property type="project" value="SGD"/>
</dbReference>
<dbReference type="GO" id="GO:0005794">
    <property type="term" value="C:Golgi apparatus"/>
    <property type="evidence" value="ECO:0000314"/>
    <property type="project" value="SGD"/>
</dbReference>
<dbReference type="GO" id="GO:0000407">
    <property type="term" value="C:phagophore assembly site"/>
    <property type="evidence" value="ECO:0000314"/>
    <property type="project" value="SGD"/>
</dbReference>
<dbReference type="GO" id="GO:1990072">
    <property type="term" value="C:TRAPPIII protein complex"/>
    <property type="evidence" value="ECO:0000314"/>
    <property type="project" value="SGD"/>
</dbReference>
<dbReference type="GO" id="GO:0000045">
    <property type="term" value="P:autophagosome assembly"/>
    <property type="evidence" value="ECO:0000315"/>
    <property type="project" value="SGD"/>
</dbReference>
<dbReference type="GO" id="GO:0071255">
    <property type="term" value="P:Cvt vesicle assembly"/>
    <property type="evidence" value="ECO:0000315"/>
    <property type="project" value="SGD"/>
</dbReference>
<dbReference type="GO" id="GO:0032258">
    <property type="term" value="P:cytoplasm to vacuole targeting by the Cvt pathway"/>
    <property type="evidence" value="ECO:0000315"/>
    <property type="project" value="SGD"/>
</dbReference>
<dbReference type="GO" id="GO:0006888">
    <property type="term" value="P:endoplasmic reticulum to Golgi vesicle-mediated transport"/>
    <property type="evidence" value="ECO:0000315"/>
    <property type="project" value="SGD"/>
</dbReference>
<dbReference type="GO" id="GO:0016236">
    <property type="term" value="P:macroautophagy"/>
    <property type="evidence" value="ECO:0000315"/>
    <property type="project" value="SGD"/>
</dbReference>
<dbReference type="GO" id="GO:0051321">
    <property type="term" value="P:meiotic cell cycle"/>
    <property type="evidence" value="ECO:0000315"/>
    <property type="project" value="SGD"/>
</dbReference>
<dbReference type="GO" id="GO:0000425">
    <property type="term" value="P:pexophagy"/>
    <property type="evidence" value="ECO:0000315"/>
    <property type="project" value="SGD"/>
</dbReference>
<dbReference type="GO" id="GO:0034727">
    <property type="term" value="P:piecemeal microautophagy of the nucleus"/>
    <property type="evidence" value="ECO:0000315"/>
    <property type="project" value="SGD"/>
</dbReference>
<dbReference type="GO" id="GO:0034497">
    <property type="term" value="P:protein localization to phagophore assembly site"/>
    <property type="evidence" value="ECO:0000315"/>
    <property type="project" value="SGD"/>
</dbReference>
<dbReference type="GO" id="GO:0030435">
    <property type="term" value="P:sporulation resulting in formation of a cellular spore"/>
    <property type="evidence" value="ECO:0007669"/>
    <property type="project" value="UniProtKB-KW"/>
</dbReference>
<dbReference type="InterPro" id="IPR024420">
    <property type="entry name" value="TRAPP_III_complex_Trs85"/>
</dbReference>
<dbReference type="PANTHER" id="PTHR12975:SF6">
    <property type="entry name" value="TRAFFICKING PROTEIN PARTICLE COMPLEX SUBUNIT 8"/>
    <property type="match status" value="1"/>
</dbReference>
<dbReference type="PANTHER" id="PTHR12975">
    <property type="entry name" value="TRANSPORT PROTEIN TRAPP"/>
    <property type="match status" value="1"/>
</dbReference>
<dbReference type="Pfam" id="PF12739">
    <property type="entry name" value="TRAPPC-Trs85"/>
    <property type="match status" value="1"/>
</dbReference>
<feature type="chain" id="PRO_0000065642" description="Trafficking protein particle complex III-specific subunit 85">
    <location>
        <begin position="1"/>
        <end position="698"/>
    </location>
</feature>
<feature type="region of interest" description="Disordered" evidence="1">
    <location>
        <begin position="82"/>
        <end position="125"/>
    </location>
</feature>
<feature type="region of interest" description="Disordered" evidence="1">
    <location>
        <begin position="678"/>
        <end position="698"/>
    </location>
</feature>
<feature type="compositionally biased region" description="Basic and acidic residues" evidence="1">
    <location>
        <begin position="678"/>
        <end position="689"/>
    </location>
</feature>
<feature type="sequence conflict" description="In Ref. 1; AAB03360." evidence="10" ref="1">
    <original>A</original>
    <variation>R</variation>
    <location>
        <position position="277"/>
    </location>
</feature>
<reference key="1">
    <citation type="journal article" date="1995" name="Yeast">
        <title>GSG1, a yeast gene required for sporulation.</title>
        <authorList>
            <person name="Kaytor M.D."/>
            <person name="Livingston D.M."/>
        </authorList>
    </citation>
    <scope>NUCLEOTIDE SEQUENCE [GENOMIC DNA]</scope>
    <scope>FUNCTION</scope>
</reference>
<reference key="2">
    <citation type="journal article" date="1997" name="Nature">
        <title>The nucleotide sequence of Saccharomyces cerevisiae chromosome IV.</title>
        <authorList>
            <person name="Jacq C."/>
            <person name="Alt-Moerbe J."/>
            <person name="Andre B."/>
            <person name="Arnold W."/>
            <person name="Bahr A."/>
            <person name="Ballesta J.P.G."/>
            <person name="Bargues M."/>
            <person name="Baron L."/>
            <person name="Becker A."/>
            <person name="Biteau N."/>
            <person name="Bloecker H."/>
            <person name="Blugeon C."/>
            <person name="Boskovic J."/>
            <person name="Brandt P."/>
            <person name="Brueckner M."/>
            <person name="Buitrago M.J."/>
            <person name="Coster F."/>
            <person name="Delaveau T."/>
            <person name="del Rey F."/>
            <person name="Dujon B."/>
            <person name="Eide L.G."/>
            <person name="Garcia-Cantalejo J.M."/>
            <person name="Goffeau A."/>
            <person name="Gomez-Peris A."/>
            <person name="Granotier C."/>
            <person name="Hanemann V."/>
            <person name="Hankeln T."/>
            <person name="Hoheisel J.D."/>
            <person name="Jaeger W."/>
            <person name="Jimenez A."/>
            <person name="Jonniaux J.-L."/>
            <person name="Kraemer C."/>
            <person name="Kuester H."/>
            <person name="Laamanen P."/>
            <person name="Legros Y."/>
            <person name="Louis E.J."/>
            <person name="Moeller-Rieker S."/>
            <person name="Monnet A."/>
            <person name="Moro M."/>
            <person name="Mueller-Auer S."/>
            <person name="Nussbaumer B."/>
            <person name="Paricio N."/>
            <person name="Paulin L."/>
            <person name="Perea J."/>
            <person name="Perez-Alonso M."/>
            <person name="Perez-Ortin J.E."/>
            <person name="Pohl T.M."/>
            <person name="Prydz H."/>
            <person name="Purnelle B."/>
            <person name="Rasmussen S.W."/>
            <person name="Remacha M.A."/>
            <person name="Revuelta J.L."/>
            <person name="Rieger M."/>
            <person name="Salom D."/>
            <person name="Saluz H.P."/>
            <person name="Saiz J.E."/>
            <person name="Saren A.-M."/>
            <person name="Schaefer M."/>
            <person name="Scharfe M."/>
            <person name="Schmidt E.R."/>
            <person name="Schneider C."/>
            <person name="Scholler P."/>
            <person name="Schwarz S."/>
            <person name="Soler-Mira A."/>
            <person name="Urrestarazu L.A."/>
            <person name="Verhasselt P."/>
            <person name="Vissers S."/>
            <person name="Voet M."/>
            <person name="Volckaert G."/>
            <person name="Wagner G."/>
            <person name="Wambutt R."/>
            <person name="Wedler E."/>
            <person name="Wedler H."/>
            <person name="Woelfl S."/>
            <person name="Harris D.E."/>
            <person name="Bowman S."/>
            <person name="Brown D."/>
            <person name="Churcher C.M."/>
            <person name="Connor R."/>
            <person name="Dedman K."/>
            <person name="Gentles S."/>
            <person name="Hamlin N."/>
            <person name="Hunt S."/>
            <person name="Jones L."/>
            <person name="McDonald S."/>
            <person name="Murphy L.D."/>
            <person name="Niblett D."/>
            <person name="Odell C."/>
            <person name="Oliver K."/>
            <person name="Rajandream M.A."/>
            <person name="Richards C."/>
            <person name="Shore L."/>
            <person name="Walsh S.V."/>
            <person name="Barrell B.G."/>
            <person name="Dietrich F.S."/>
            <person name="Mulligan J.T."/>
            <person name="Allen E."/>
            <person name="Araujo R."/>
            <person name="Aviles E."/>
            <person name="Berno A."/>
            <person name="Carpenter J."/>
            <person name="Chen E."/>
            <person name="Cherry J.M."/>
            <person name="Chung E."/>
            <person name="Duncan M."/>
            <person name="Hunicke-Smith S."/>
            <person name="Hyman R.W."/>
            <person name="Komp C."/>
            <person name="Lashkari D."/>
            <person name="Lew H."/>
            <person name="Lin D."/>
            <person name="Mosedale D."/>
            <person name="Nakahara K."/>
            <person name="Namath A."/>
            <person name="Oefner P."/>
            <person name="Oh C."/>
            <person name="Petel F.X."/>
            <person name="Roberts D."/>
            <person name="Schramm S."/>
            <person name="Schroeder M."/>
            <person name="Shogren T."/>
            <person name="Shroff N."/>
            <person name="Winant A."/>
            <person name="Yelton M.A."/>
            <person name="Botstein D."/>
            <person name="Davis R.W."/>
            <person name="Johnston M."/>
            <person name="Andrews S."/>
            <person name="Brinkman R."/>
            <person name="Cooper J."/>
            <person name="Ding H."/>
            <person name="Du Z."/>
            <person name="Favello A."/>
            <person name="Fulton L."/>
            <person name="Gattung S."/>
            <person name="Greco T."/>
            <person name="Hallsworth K."/>
            <person name="Hawkins J."/>
            <person name="Hillier L.W."/>
            <person name="Jier M."/>
            <person name="Johnson D."/>
            <person name="Johnston L."/>
            <person name="Kirsten J."/>
            <person name="Kucaba T."/>
            <person name="Langston Y."/>
            <person name="Latreille P."/>
            <person name="Le T."/>
            <person name="Mardis E."/>
            <person name="Menezes S."/>
            <person name="Miller N."/>
            <person name="Nhan M."/>
            <person name="Pauley A."/>
            <person name="Peluso D."/>
            <person name="Rifkin L."/>
            <person name="Riles L."/>
            <person name="Taich A."/>
            <person name="Trevaskis E."/>
            <person name="Vignati D."/>
            <person name="Wilcox L."/>
            <person name="Wohldman P."/>
            <person name="Vaudin M."/>
            <person name="Wilson R."/>
            <person name="Waterston R."/>
            <person name="Albermann K."/>
            <person name="Hani J."/>
            <person name="Heumann K."/>
            <person name="Kleine K."/>
            <person name="Mewes H.-W."/>
            <person name="Zollner A."/>
            <person name="Zaccaria P."/>
        </authorList>
    </citation>
    <scope>NUCLEOTIDE SEQUENCE [LARGE SCALE GENOMIC DNA]</scope>
    <source>
        <strain>ATCC 204508 / S288c</strain>
    </source>
</reference>
<reference key="3">
    <citation type="journal article" date="2014" name="G3 (Bethesda)">
        <title>The reference genome sequence of Saccharomyces cerevisiae: Then and now.</title>
        <authorList>
            <person name="Engel S.R."/>
            <person name="Dietrich F.S."/>
            <person name="Fisk D.G."/>
            <person name="Binkley G."/>
            <person name="Balakrishnan R."/>
            <person name="Costanzo M.C."/>
            <person name="Dwight S.S."/>
            <person name="Hitz B.C."/>
            <person name="Karra K."/>
            <person name="Nash R.S."/>
            <person name="Weng S."/>
            <person name="Wong E.D."/>
            <person name="Lloyd P."/>
            <person name="Skrzypek M.S."/>
            <person name="Miyasato S.R."/>
            <person name="Simison M."/>
            <person name="Cherry J.M."/>
        </authorList>
    </citation>
    <scope>GENOME REANNOTATION</scope>
    <source>
        <strain>ATCC 204508 / S288c</strain>
    </source>
</reference>
<reference key="4">
    <citation type="journal article" date="1998" name="EMBO J.">
        <title>TRAPP, a highly conserved novel complex on the cis-Golgi that mediates vesicle docking and fusion.</title>
        <authorList>
            <person name="Sacher M."/>
            <person name="Jiang Y."/>
            <person name="Barrowman J."/>
            <person name="Scarpa A."/>
            <person name="Burston J."/>
            <person name="Zhang L."/>
            <person name="Schieltz D."/>
            <person name="Yates J.R. III"/>
            <person name="Abeliovich H."/>
            <person name="Ferro-Novick S."/>
        </authorList>
    </citation>
    <scope>IDENTIFICATION IN THE TRAPP II COMPLEX</scope>
</reference>
<reference key="5">
    <citation type="journal article" date="2000" name="Eur. J. Cell Biol.">
        <title>Identification and characterization of five new subunits of TRAPP.</title>
        <authorList>
            <person name="Sacher M."/>
            <person name="Barrowman J."/>
            <person name="Schieltz D."/>
            <person name="Yates J.R. III"/>
            <person name="Ferro-Novick S."/>
        </authorList>
    </citation>
    <scope>FUNCTION</scope>
</reference>
<reference key="6">
    <citation type="journal article" date="2001" name="Mol. Cell">
        <title>TRAPP I implicated in the specificity of tethering in ER-to-Golgi transport.</title>
        <authorList>
            <person name="Sacher M."/>
            <person name="Barrowman J."/>
            <person name="Wang W."/>
            <person name="Horecka J."/>
            <person name="Zhang Y."/>
            <person name="Pypaert M."/>
            <person name="Ferro-Novick S."/>
        </authorList>
    </citation>
    <scope>FUNCTION OF THE TRAPP II COMPLEX</scope>
    <scope>IDENTIFICATION IN THE TRAPP II COMPLEX</scope>
    <scope>FUNCTION OF THE TRAPP I COMPLEX</scope>
    <scope>IDENTIFICATION IN THE TRAPP I COMPLEX</scope>
    <scope>SUBCELLULAR LOCATION</scope>
</reference>
<reference key="7">
    <citation type="journal article" date="2003" name="Nature">
        <title>Global analysis of protein expression in yeast.</title>
        <authorList>
            <person name="Ghaemmaghami S."/>
            <person name="Huh W.-K."/>
            <person name="Bower K."/>
            <person name="Howson R.W."/>
            <person name="Belle A."/>
            <person name="Dephoure N."/>
            <person name="O'Shea E.K."/>
            <person name="Weissman J.S."/>
        </authorList>
    </citation>
    <scope>LEVEL OF PROTEIN EXPRESSION [LARGE SCALE ANALYSIS]</scope>
</reference>
<reference key="8">
    <citation type="journal article" date="2005" name="Autophagy">
        <title>Trs85 is required for macroautophagy, pexophagy and cytoplasm to vacuole targeting in Yarrowia lipolytica and Saccharomyces cerevisiae.</title>
        <authorList>
            <person name="Nazarko T.Y."/>
            <person name="Huang J."/>
            <person name="Nicaud J.M."/>
            <person name="Klionsky D.J."/>
            <person name="Sibirny A.A."/>
        </authorList>
    </citation>
    <scope>FUNCTION</scope>
</reference>
<reference key="9">
    <citation type="journal article" date="2005" name="J. Biol. Chem.">
        <title>Trs85 (Gsg1), a component of the TRAPP complexes, is required for the organization of the preautophagosomal structure during selective autophagy via the Cvt pathway.</title>
        <authorList>
            <person name="Meiling-Wesse K."/>
            <person name="Epple U.D."/>
            <person name="Krick R."/>
            <person name="Barth H."/>
            <person name="Appelles A."/>
            <person name="Voss C."/>
            <person name="Eskelinen E.L."/>
            <person name="Thumm M."/>
        </authorList>
    </citation>
    <scope>FUNCTION</scope>
</reference>
<reference key="10">
    <citation type="journal article" date="2009" name="Science">
        <title>Global analysis of Cdk1 substrate phosphorylation sites provides insights into evolution.</title>
        <authorList>
            <person name="Holt L.J."/>
            <person name="Tuch B.B."/>
            <person name="Villen J."/>
            <person name="Johnson A.D."/>
            <person name="Gygi S.P."/>
            <person name="Morgan D.O."/>
        </authorList>
    </citation>
    <scope>IDENTIFICATION BY MASS SPECTROMETRY [LARGE SCALE ANALYSIS]</scope>
</reference>
<reference key="11">
    <citation type="journal article" date="2010" name="Proc. Natl. Acad. Sci. U.S.A.">
        <title>Trs85 directs a Ypt1 GEF, TRAPPIII, to the phagophore to promote autophagy.</title>
        <authorList>
            <person name="Lynch-Day M.A."/>
            <person name="Bhandari D."/>
            <person name="Menon S."/>
            <person name="Huang J."/>
            <person name="Cai H."/>
            <person name="Bartholomew C.R."/>
            <person name="Brumell J.H."/>
            <person name="Ferro-Novick S."/>
            <person name="Klionsky D.J."/>
        </authorList>
    </citation>
    <scope>IDENTIFICATION IN THE TRAPP III COMPLEX</scope>
    <scope>SUBCELLULAR LOCATION</scope>
    <scope>FUNCTION</scope>
</reference>
<organism>
    <name type="scientific">Saccharomyces cerevisiae (strain ATCC 204508 / S288c)</name>
    <name type="common">Baker's yeast</name>
    <dbReference type="NCBI Taxonomy" id="559292"/>
    <lineage>
        <taxon>Eukaryota</taxon>
        <taxon>Fungi</taxon>
        <taxon>Dikarya</taxon>
        <taxon>Ascomycota</taxon>
        <taxon>Saccharomycotina</taxon>
        <taxon>Saccharomycetes</taxon>
        <taxon>Saccharomycetales</taxon>
        <taxon>Saccharomycetaceae</taxon>
        <taxon>Saccharomyces</taxon>
    </lineage>
</organism>
<comment type="function">
    <text evidence="2 3 5 6 7 8">Specific subunit of the TRAPP III complex that acts as an autophagy-specific guanine nucleotide exchange factor (GEF) for YPT1. TRS85 directs the TRAPP III complex to the phagophore assembly site (PAS) that is involved in autophagosome formation. Required for membrane expansion during autophagy and the CVT pathway. Required for sporulation. Has a role late in meiosis following DNA replication.</text>
</comment>
<comment type="subunit">
    <text evidence="3 7 9">Part of the multisubunit TRAPP (transport protein particle) III complex composed of BET3, BET5, TRS20, TRS23, TRS31, TRS33 and TRS85.</text>
</comment>
<comment type="interaction">
    <interactant intactId="EBI-19492">
        <id>P46944</id>
    </interactant>
    <interactant intactId="EBI-19468">
        <id>P38334</id>
        <label>TRS20</label>
    </interactant>
    <organismsDiffer>false</organismsDiffer>
    <experiments>7</experiments>
</comment>
<comment type="subcellular location">
    <subcellularLocation>
        <location evidence="3 7">Preautophagosomal structure</location>
    </subcellularLocation>
</comment>
<comment type="miscellaneous">
    <text evidence="4">Present with 8760 molecules/cell in log phase SD medium.</text>
</comment>
<comment type="similarity">
    <text evidence="10">Belongs to the TRS85 family.</text>
</comment>
<protein>
    <recommendedName>
        <fullName>Trafficking protein particle complex III-specific subunit 85</fullName>
        <shortName>TRAPP III-specific subunit 85</shortName>
    </recommendedName>
    <alternativeName>
        <fullName>Muddled meiosis protein 1</fullName>
    </alternativeName>
    <alternativeName>
        <fullName>Sporulation protein GSG1</fullName>
    </alternativeName>
    <alternativeName>
        <fullName>Transport protein particle 85 kDa subunit</fullName>
    </alternativeName>
</protein>
<proteinExistence type="evidence at protein level"/>
<sequence>MVFSYEHYMNLLFHLDNSKETVPPEIAKRIISNAIAPVITVTSTPLFDKHIQETYKVDSLYMLLRFFGGCVSDRDQANEAKVGQHEHEVCDASDSTDSIPKNKNLEVPNLSKKGSRSRSNSLFQRDSTQSQYIRFTRPLGDLIETRDANDMLFNYHSLEVFLDNYLKLVAANTDEMVPHNLLKKSIYHSFFSLAISSTNNLSPYETFNHPILSLIALDISNGEVYEDARDLLVNFKNLNHNTENFPIFMNTNEMLPVFLLCYNDDSQEEFEKCQALAKKLKKQLFVESILLALWKDSFIYDENSVIQLHQPVMSSLEEILFFLQAPTQTTLSLALINSIYDMLDYLVYDLMIPFMKRKVSFWEETILQPRKSLFNGAKFFKKFMNKNPVNGNHQHNSLTRDSQGNEYFASSSSEFLMRKLADWSMMLSDFKTAYSTYESLMDDLDAFPKYLASCIEWCAVSLLMGAQSIVTVKMIKNDINPLIERALATYENCSRIQRGKGKESNSLDVTEPVRSYETRCMILASELFLSLSNTWTSTPYAIQYLETILDECKLGPCSQIMVWERLSDCYNLRVDPRIKHRVGAMKKDAKDTEDLRGEHKYSTDHFTDEDILSEGLTRRRKAAFFRLIAAKKWAEQKQWRQVSWCLKDIESTYSEIKFLHGNGLILSKLKNQLNLKDVDSAPRPSEKNLTRTSVSFIG</sequence>
<name>TRS85_YEAST</name>
<evidence type="ECO:0000256" key="1">
    <source>
        <dbReference type="SAM" id="MobiDB-lite"/>
    </source>
</evidence>
<evidence type="ECO:0000269" key="2">
    <source>
    </source>
</evidence>
<evidence type="ECO:0000269" key="3">
    <source>
    </source>
</evidence>
<evidence type="ECO:0000269" key="4">
    <source>
    </source>
</evidence>
<evidence type="ECO:0000269" key="5">
    <source>
    </source>
</evidence>
<evidence type="ECO:0000269" key="6">
    <source>
    </source>
</evidence>
<evidence type="ECO:0000269" key="7">
    <source>
    </source>
</evidence>
<evidence type="ECO:0000269" key="8">
    <source>
    </source>
</evidence>
<evidence type="ECO:0000269" key="9">
    <source>
    </source>
</evidence>
<evidence type="ECO:0000305" key="10"/>
<keyword id="KW-0002">3D-structure</keyword>
<keyword id="KW-0072">Autophagy</keyword>
<keyword id="KW-0469">Meiosis</keyword>
<keyword id="KW-1185">Reference proteome</keyword>
<keyword id="KW-0749">Sporulation</keyword>
<keyword id="KW-0813">Transport</keyword>